<dbReference type="EC" id="3.1.1.23" evidence="4 6"/>
<dbReference type="EMBL" id="AK002883">
    <property type="protein sequence ID" value="BAB22430.1"/>
    <property type="molecule type" value="mRNA"/>
</dbReference>
<dbReference type="EMBL" id="AK076105">
    <property type="protein sequence ID" value="BAC36186.1"/>
    <property type="molecule type" value="mRNA"/>
</dbReference>
<dbReference type="EMBL" id="AK090076">
    <property type="protein sequence ID" value="BAC41081.1"/>
    <property type="molecule type" value="mRNA"/>
</dbReference>
<dbReference type="EMBL" id="AK168782">
    <property type="protein sequence ID" value="BAE40616.1"/>
    <property type="status" value="ALT_INIT"/>
    <property type="molecule type" value="mRNA"/>
</dbReference>
<dbReference type="EMBL" id="BC027011">
    <property type="protein sequence ID" value="AAH27011.1"/>
    <property type="molecule type" value="mRNA"/>
</dbReference>
<dbReference type="CCDS" id="CCDS26808.1">
    <molecule id="Q8R2Y0-1"/>
</dbReference>
<dbReference type="CCDS" id="CCDS88563.1">
    <molecule id="Q8R2Y0-2"/>
</dbReference>
<dbReference type="RefSeq" id="NP_001317993.1">
    <molecule id="Q8R2Y0-1"/>
    <property type="nucleotide sequence ID" value="NM_001331064.1"/>
</dbReference>
<dbReference type="RefSeq" id="NP_001317994.1">
    <molecule id="Q8R2Y0-2"/>
    <property type="nucleotide sequence ID" value="NM_001331065.1"/>
</dbReference>
<dbReference type="RefSeq" id="NP_079617.2">
    <molecule id="Q8R2Y0-1"/>
    <property type="nucleotide sequence ID" value="NM_025341.4"/>
</dbReference>
<dbReference type="RefSeq" id="XP_006518136.1">
    <molecule id="Q8R2Y0-1"/>
    <property type="nucleotide sequence ID" value="XM_006518073.4"/>
</dbReference>
<dbReference type="SMR" id="Q8R2Y0"/>
<dbReference type="BioGRID" id="211201">
    <property type="interactions" value="2"/>
</dbReference>
<dbReference type="FunCoup" id="Q8R2Y0">
    <property type="interactions" value="31"/>
</dbReference>
<dbReference type="STRING" id="10090.ENSMUSP00000129169"/>
<dbReference type="BindingDB" id="Q8R2Y0"/>
<dbReference type="ChEMBL" id="CHEMBL5010"/>
<dbReference type="GuidetoPHARMACOLOGY" id="2919"/>
<dbReference type="SwissLipids" id="SLP:000001860"/>
<dbReference type="ESTHER" id="mouse-ABHD6">
    <property type="family name" value="ABHD6-Lip"/>
</dbReference>
<dbReference type="MEROPS" id="S33.977"/>
<dbReference type="iPTMnet" id="Q8R2Y0"/>
<dbReference type="PhosphoSitePlus" id="Q8R2Y0"/>
<dbReference type="SwissPalm" id="Q8R2Y0"/>
<dbReference type="jPOST" id="Q8R2Y0"/>
<dbReference type="PaxDb" id="10090-ENSMUSP00000129169"/>
<dbReference type="PeptideAtlas" id="Q8R2Y0"/>
<dbReference type="ProteomicsDB" id="285827">
    <molecule id="Q8R2Y0-1"/>
</dbReference>
<dbReference type="ProteomicsDB" id="285828">
    <molecule id="Q8R2Y0-2"/>
</dbReference>
<dbReference type="Pumba" id="Q8R2Y0"/>
<dbReference type="Antibodypedia" id="2562">
    <property type="antibodies" value="123 antibodies from 27 providers"/>
</dbReference>
<dbReference type="DNASU" id="66082"/>
<dbReference type="Ensembl" id="ENSMUST00000166497.9">
    <molecule id="Q8R2Y0-1"/>
    <property type="protein sequence ID" value="ENSMUSP00000129169.2"/>
    <property type="gene ID" value="ENSMUSG00000025277.15"/>
</dbReference>
<dbReference type="Ensembl" id="ENSMUST00000225234.2">
    <molecule id="Q8R2Y0-2"/>
    <property type="protein sequence ID" value="ENSMUSP00000153068.2"/>
    <property type="gene ID" value="ENSMUSG00000025277.15"/>
</dbReference>
<dbReference type="GeneID" id="66082"/>
<dbReference type="KEGG" id="mmu:66082"/>
<dbReference type="UCSC" id="uc007sen.1">
    <molecule id="Q8R2Y0-1"/>
    <property type="organism name" value="mouse"/>
</dbReference>
<dbReference type="AGR" id="MGI:1913332"/>
<dbReference type="CTD" id="57406"/>
<dbReference type="MGI" id="MGI:1913332">
    <property type="gene designation" value="Abhd6"/>
</dbReference>
<dbReference type="VEuPathDB" id="HostDB:ENSMUSG00000025277"/>
<dbReference type="eggNOG" id="KOG1454">
    <property type="taxonomic scope" value="Eukaryota"/>
</dbReference>
<dbReference type="GeneTree" id="ENSGT00510000047225"/>
<dbReference type="HOGENOM" id="CLU_020336_13_9_1"/>
<dbReference type="InParanoid" id="Q8R2Y0"/>
<dbReference type="OMA" id="NAMWQYS"/>
<dbReference type="OrthoDB" id="6431331at2759"/>
<dbReference type="PhylomeDB" id="Q8R2Y0"/>
<dbReference type="TreeFam" id="TF331946"/>
<dbReference type="Reactome" id="R-MMU-426048">
    <property type="pathway name" value="Arachidonate production from DAG"/>
</dbReference>
<dbReference type="SABIO-RK" id="Q8R2Y0"/>
<dbReference type="BioGRID-ORCS" id="66082">
    <property type="hits" value="1 hit in 78 CRISPR screens"/>
</dbReference>
<dbReference type="CD-CODE" id="CE726F99">
    <property type="entry name" value="Postsynaptic density"/>
</dbReference>
<dbReference type="ChiTaRS" id="Abhd6">
    <property type="organism name" value="mouse"/>
</dbReference>
<dbReference type="PRO" id="PR:Q8R2Y0"/>
<dbReference type="Proteomes" id="UP000000589">
    <property type="component" value="Chromosome 14"/>
</dbReference>
<dbReference type="RNAct" id="Q8R2Y0">
    <property type="molecule type" value="protein"/>
</dbReference>
<dbReference type="Bgee" id="ENSMUSG00000025277">
    <property type="expression patterns" value="Expressed in placenta labyrinth and 236 other cell types or tissues"/>
</dbReference>
<dbReference type="ExpressionAtlas" id="Q8R2Y0">
    <property type="expression patterns" value="baseline and differential"/>
</dbReference>
<dbReference type="GO" id="GO:0032281">
    <property type="term" value="C:AMPA glutamate receptor complex"/>
    <property type="evidence" value="ECO:0000314"/>
    <property type="project" value="MGI"/>
</dbReference>
<dbReference type="GO" id="GO:0098982">
    <property type="term" value="C:GABA-ergic synapse"/>
    <property type="evidence" value="ECO:0000314"/>
    <property type="project" value="SynGO"/>
</dbReference>
<dbReference type="GO" id="GO:0098978">
    <property type="term" value="C:glutamatergic synapse"/>
    <property type="evidence" value="ECO:0000314"/>
    <property type="project" value="SynGO"/>
</dbReference>
<dbReference type="GO" id="GO:0031902">
    <property type="term" value="C:late endosome membrane"/>
    <property type="evidence" value="ECO:0000314"/>
    <property type="project" value="UniProtKB"/>
</dbReference>
<dbReference type="GO" id="GO:0005765">
    <property type="term" value="C:lysosomal membrane"/>
    <property type="evidence" value="ECO:0000314"/>
    <property type="project" value="UniProtKB"/>
</dbReference>
<dbReference type="GO" id="GO:0016020">
    <property type="term" value="C:membrane"/>
    <property type="evidence" value="ECO:0000314"/>
    <property type="project" value="UniProtKB"/>
</dbReference>
<dbReference type="GO" id="GO:0031966">
    <property type="term" value="C:mitochondrial membrane"/>
    <property type="evidence" value="ECO:0007669"/>
    <property type="project" value="UniProtKB-SubCell"/>
</dbReference>
<dbReference type="GO" id="GO:0005739">
    <property type="term" value="C:mitochondrion"/>
    <property type="evidence" value="ECO:0000314"/>
    <property type="project" value="MGI"/>
</dbReference>
<dbReference type="GO" id="GO:0045211">
    <property type="term" value="C:postsynaptic membrane"/>
    <property type="evidence" value="ECO:0000314"/>
    <property type="project" value="SynGO"/>
</dbReference>
<dbReference type="GO" id="GO:0047372">
    <property type="term" value="F:monoacylglycerol lipase activity"/>
    <property type="evidence" value="ECO:0000314"/>
    <property type="project" value="UniProtKB"/>
</dbReference>
<dbReference type="GO" id="GO:0004620">
    <property type="term" value="F:phospholipase activity"/>
    <property type="evidence" value="ECO:0000314"/>
    <property type="project" value="UniProtKB"/>
</dbReference>
<dbReference type="GO" id="GO:0046464">
    <property type="term" value="P:acylglycerol catabolic process"/>
    <property type="evidence" value="ECO:0000314"/>
    <property type="project" value="UniProtKB"/>
</dbReference>
<dbReference type="GO" id="GO:0060292">
    <property type="term" value="P:long-term synaptic depression"/>
    <property type="evidence" value="ECO:0000315"/>
    <property type="project" value="MGI"/>
</dbReference>
<dbReference type="GO" id="GO:2001311">
    <property type="term" value="P:lysobisphosphatidic acid metabolic process"/>
    <property type="evidence" value="ECO:0000314"/>
    <property type="project" value="UniProtKB"/>
</dbReference>
<dbReference type="GO" id="GO:0052651">
    <property type="term" value="P:monoacylglycerol catabolic process"/>
    <property type="evidence" value="ECO:0000314"/>
    <property type="project" value="UniProtKB"/>
</dbReference>
<dbReference type="GO" id="GO:0030336">
    <property type="term" value="P:negative regulation of cell migration"/>
    <property type="evidence" value="ECO:0000315"/>
    <property type="project" value="MGI"/>
</dbReference>
<dbReference type="GO" id="GO:0120163">
    <property type="term" value="P:negative regulation of cold-induced thermogenesis"/>
    <property type="evidence" value="ECO:0000315"/>
    <property type="project" value="YuBioLab"/>
</dbReference>
<dbReference type="GO" id="GO:0009395">
    <property type="term" value="P:phospholipid catabolic process"/>
    <property type="evidence" value="ECO:0000314"/>
    <property type="project" value="UniProtKB"/>
</dbReference>
<dbReference type="GO" id="GO:0046889">
    <property type="term" value="P:positive regulation of lipid biosynthetic process"/>
    <property type="evidence" value="ECO:0000315"/>
    <property type="project" value="UniProtKB"/>
</dbReference>
<dbReference type="GO" id="GO:2000124">
    <property type="term" value="P:regulation of endocannabinoid signaling pathway"/>
    <property type="evidence" value="ECO:0000315"/>
    <property type="project" value="MGI"/>
</dbReference>
<dbReference type="GO" id="GO:0099178">
    <property type="term" value="P:regulation of retrograde trans-synaptic signaling by endocanabinoid"/>
    <property type="evidence" value="ECO:0000314"/>
    <property type="project" value="SynGO"/>
</dbReference>
<dbReference type="FunFam" id="3.40.50.1820:FF:000082">
    <property type="entry name" value="monoacylglycerol lipase ABHD6"/>
    <property type="match status" value="1"/>
</dbReference>
<dbReference type="Gene3D" id="3.40.50.1820">
    <property type="entry name" value="alpha/beta hydrolase"/>
    <property type="match status" value="1"/>
</dbReference>
<dbReference type="InterPro" id="IPR000073">
    <property type="entry name" value="AB_hydrolase_1"/>
</dbReference>
<dbReference type="InterPro" id="IPR029058">
    <property type="entry name" value="AB_hydrolase_fold"/>
</dbReference>
<dbReference type="InterPro" id="IPR050266">
    <property type="entry name" value="AB_hydrolase_sf"/>
</dbReference>
<dbReference type="InterPro" id="IPR000639">
    <property type="entry name" value="Epox_hydrolase-like"/>
</dbReference>
<dbReference type="PANTHER" id="PTHR43798">
    <property type="entry name" value="MONOACYLGLYCEROL LIPASE"/>
    <property type="match status" value="1"/>
</dbReference>
<dbReference type="PANTHER" id="PTHR43798:SF5">
    <property type="entry name" value="MONOACYLGLYCEROL LIPASE ABHD6"/>
    <property type="match status" value="1"/>
</dbReference>
<dbReference type="Pfam" id="PF00561">
    <property type="entry name" value="Abhydrolase_1"/>
    <property type="match status" value="1"/>
</dbReference>
<dbReference type="PRINTS" id="PR00111">
    <property type="entry name" value="ABHYDROLASE"/>
</dbReference>
<dbReference type="PRINTS" id="PR00412">
    <property type="entry name" value="EPOXHYDRLASE"/>
</dbReference>
<dbReference type="SUPFAM" id="SSF53474">
    <property type="entry name" value="alpha/beta-Hydrolases"/>
    <property type="match status" value="1"/>
</dbReference>
<comment type="function">
    <text evidence="4 5 6 7">Lipase that preferentially hydrolysis medium-chain saturated monoacylglycerols including 2-arachidonoylglycerol (PubMed:18096503, PubMed:20657592). Through 2-arachidonoylglycerol degradation may regulate endocannabinoid signaling pathways (PubMed:18096503, PubMed:20657592). Also has a lysophosphatidyl lipase activity with a preference for lysophosphatidylglycerol among other lysophospholipids (PubMed:24095738). Also able to degrade bis(monoacylglycero)phosphate (BMP) and constitutes the major enzyme for BMP catabolism (PubMed:26491015). BMP, also known as lysobisphosphatidic acid, is enriched in late endosomes and lysosomes and plays a key role in the formation of intraluminal vesicles and in lipid sorting (PubMed:26491015).</text>
</comment>
<comment type="catalytic activity">
    <reaction evidence="4 6">
        <text>Hydrolyzes glycerol monoesters of long-chain fatty acids.</text>
        <dbReference type="EC" id="3.1.1.23"/>
    </reaction>
</comment>
<comment type="catalytic activity">
    <reaction evidence="4">
        <text>2-(5Z,8Z,11Z,14Z-eicosatetraenoyl)-glycerol + H2O = glycerol + (5Z,8Z,11Z,14Z)-eicosatetraenoate + H(+)</text>
        <dbReference type="Rhea" id="RHEA:26132"/>
        <dbReference type="ChEBI" id="CHEBI:15377"/>
        <dbReference type="ChEBI" id="CHEBI:15378"/>
        <dbReference type="ChEBI" id="CHEBI:17754"/>
        <dbReference type="ChEBI" id="CHEBI:32395"/>
        <dbReference type="ChEBI" id="CHEBI:52392"/>
    </reaction>
    <physiologicalReaction direction="left-to-right" evidence="4">
        <dbReference type="Rhea" id="RHEA:26133"/>
    </physiologicalReaction>
</comment>
<comment type="catalytic activity">
    <reaction evidence="2">
        <text>1-octanoylglycerol + H2O = octanoate + glycerol + H(+)</text>
        <dbReference type="Rhea" id="RHEA:44328"/>
        <dbReference type="ChEBI" id="CHEBI:15377"/>
        <dbReference type="ChEBI" id="CHEBI:15378"/>
        <dbReference type="ChEBI" id="CHEBI:17754"/>
        <dbReference type="ChEBI" id="CHEBI:25646"/>
        <dbReference type="ChEBI" id="CHEBI:85241"/>
    </reaction>
</comment>
<comment type="catalytic activity">
    <reaction evidence="2">
        <text>1-decanoylglycerol + H2O = decanoate + glycerol + H(+)</text>
        <dbReference type="Rhea" id="RHEA:44320"/>
        <dbReference type="ChEBI" id="CHEBI:15377"/>
        <dbReference type="ChEBI" id="CHEBI:15378"/>
        <dbReference type="ChEBI" id="CHEBI:17754"/>
        <dbReference type="ChEBI" id="CHEBI:27689"/>
        <dbReference type="ChEBI" id="CHEBI:75547"/>
    </reaction>
</comment>
<comment type="catalytic activity">
    <reaction evidence="2">
        <text>1-dodecanoylglycerol + H2O = dodecanoate + glycerol + H(+)</text>
        <dbReference type="Rhea" id="RHEA:44316"/>
        <dbReference type="ChEBI" id="CHEBI:15377"/>
        <dbReference type="ChEBI" id="CHEBI:15378"/>
        <dbReference type="ChEBI" id="CHEBI:17754"/>
        <dbReference type="ChEBI" id="CHEBI:18262"/>
        <dbReference type="ChEBI" id="CHEBI:75539"/>
    </reaction>
</comment>
<comment type="catalytic activity">
    <reaction evidence="2">
        <text>1-tetradecanoylglycerol + H2O = tetradecanoate + glycerol + H(+)</text>
        <dbReference type="Rhea" id="RHEA:44312"/>
        <dbReference type="ChEBI" id="CHEBI:15377"/>
        <dbReference type="ChEBI" id="CHEBI:15378"/>
        <dbReference type="ChEBI" id="CHEBI:17754"/>
        <dbReference type="ChEBI" id="CHEBI:30807"/>
        <dbReference type="ChEBI" id="CHEBI:75562"/>
    </reaction>
</comment>
<comment type="catalytic activity">
    <reaction evidence="2">
        <text>2-hexadecanoylglycerol + H2O = glycerol + hexadecanoate + H(+)</text>
        <dbReference type="Rhea" id="RHEA:39963"/>
        <dbReference type="ChEBI" id="CHEBI:7896"/>
        <dbReference type="ChEBI" id="CHEBI:15377"/>
        <dbReference type="ChEBI" id="CHEBI:15378"/>
        <dbReference type="ChEBI" id="CHEBI:17754"/>
        <dbReference type="ChEBI" id="CHEBI:75455"/>
    </reaction>
</comment>
<comment type="catalytic activity">
    <reaction evidence="2">
        <text>2-(9Z-octadecenoyl)-glycerol + H2O = glycerol + (9Z)-octadecenoate + H(+)</text>
        <dbReference type="Rhea" id="RHEA:38491"/>
        <dbReference type="ChEBI" id="CHEBI:15377"/>
        <dbReference type="ChEBI" id="CHEBI:15378"/>
        <dbReference type="ChEBI" id="CHEBI:17754"/>
        <dbReference type="ChEBI" id="CHEBI:30823"/>
        <dbReference type="ChEBI" id="CHEBI:73990"/>
    </reaction>
</comment>
<comment type="catalytic activity">
    <reaction evidence="7">
        <text>1-(9Z-octadecenoyl)-glycerol + H2O = glycerol + (9Z)-octadecenoate + H(+)</text>
        <dbReference type="Rhea" id="RHEA:38487"/>
        <dbReference type="ChEBI" id="CHEBI:15377"/>
        <dbReference type="ChEBI" id="CHEBI:15378"/>
        <dbReference type="ChEBI" id="CHEBI:17754"/>
        <dbReference type="ChEBI" id="CHEBI:30823"/>
        <dbReference type="ChEBI" id="CHEBI:75342"/>
    </reaction>
    <physiologicalReaction direction="left-to-right" evidence="7">
        <dbReference type="Rhea" id="RHEA:38488"/>
    </physiologicalReaction>
</comment>
<comment type="catalytic activity">
    <reaction evidence="2">
        <text>2-(9Z,12Z-octadecadienoyl)-glycerol + H2O = (9Z,12Z)-octadecadienoate + glycerol + H(+)</text>
        <dbReference type="Rhea" id="RHEA:44732"/>
        <dbReference type="ChEBI" id="CHEBI:15377"/>
        <dbReference type="ChEBI" id="CHEBI:15378"/>
        <dbReference type="ChEBI" id="CHEBI:17754"/>
        <dbReference type="ChEBI" id="CHEBI:30245"/>
        <dbReference type="ChEBI" id="CHEBI:75457"/>
    </reaction>
</comment>
<comment type="catalytic activity">
    <reaction evidence="2">
        <text>1-(5Z,8Z,11Z,14Z-eicosatetraenoyl)-glycerol + H2O = glycerol + (5Z,8Z,11Z,14Z)-eicosatetraenoate + H(+)</text>
        <dbReference type="Rhea" id="RHEA:44728"/>
        <dbReference type="ChEBI" id="CHEBI:15377"/>
        <dbReference type="ChEBI" id="CHEBI:15378"/>
        <dbReference type="ChEBI" id="CHEBI:17754"/>
        <dbReference type="ChEBI" id="CHEBI:32395"/>
        <dbReference type="ChEBI" id="CHEBI:75612"/>
    </reaction>
</comment>
<comment type="catalytic activity">
    <reaction evidence="2">
        <text>1-(9Z,12Z-octadecadienoyl)-glycerol + H2O = (9Z,12Z)-octadecadienoate + glycerol + H(+)</text>
        <dbReference type="Rhea" id="RHEA:48428"/>
        <dbReference type="ChEBI" id="CHEBI:15377"/>
        <dbReference type="ChEBI" id="CHEBI:15378"/>
        <dbReference type="ChEBI" id="CHEBI:17754"/>
        <dbReference type="ChEBI" id="CHEBI:30245"/>
        <dbReference type="ChEBI" id="CHEBI:75568"/>
    </reaction>
</comment>
<comment type="catalytic activity">
    <reaction evidence="7">
        <text>3-(9Z-octadecenoyl)-sn-glycero-1-phospho-(3'-(9Z-octadecenoyl)-1'-sn-glycerol) + H2O = 3-(9Z-octadecenoyl)-sn-glycero-1-phospho-(1'-sn-glycerol) + (9Z)-octadecenoate + H(+)</text>
        <dbReference type="Rhea" id="RHEA:55712"/>
        <dbReference type="ChEBI" id="CHEBI:15377"/>
        <dbReference type="ChEBI" id="CHEBI:15378"/>
        <dbReference type="ChEBI" id="CHEBI:30823"/>
        <dbReference type="ChEBI" id="CHEBI:139150"/>
        <dbReference type="ChEBI" id="CHEBI:139152"/>
    </reaction>
    <physiologicalReaction direction="left-to-right" evidence="7">
        <dbReference type="Rhea" id="RHEA:55713"/>
    </physiologicalReaction>
</comment>
<comment type="catalytic activity">
    <reaction evidence="7">
        <text>(S,S)-2-(9Z-octadecenoyl)-sn-glycero-1-phospho-(2'-(9Z-octadecenoyl)-1'-sn-glycerol) + H2O = (S,S)-2-(9Z-octadecenoyl)-sn-glycero-1-phospho-(1'-sn-glycerol) + (9Z)-octadecenoate + H(+)</text>
        <dbReference type="Rhea" id="RHEA:55716"/>
        <dbReference type="ChEBI" id="CHEBI:15377"/>
        <dbReference type="ChEBI" id="CHEBI:15378"/>
        <dbReference type="ChEBI" id="CHEBI:30823"/>
        <dbReference type="ChEBI" id="CHEBI:139156"/>
        <dbReference type="ChEBI" id="CHEBI:139157"/>
    </reaction>
    <physiologicalReaction direction="left-to-right" evidence="7">
        <dbReference type="Rhea" id="RHEA:55717"/>
    </physiologicalReaction>
</comment>
<comment type="catalytic activity">
    <reaction evidence="7">
        <text>(R,R)-2-(9Z-octadecenoyl)-sn-glycero-3-phospho-(2'-(9Z-octadecenoyl)-3'-sn-glycerol) + H2O = (R,R)-2-(9Z-octadecenoyl)-sn-glycero-3-phospho-(3'-sn-glycerol) + (9Z)-octadecenoate + H(+)</text>
        <dbReference type="Rhea" id="RHEA:55804"/>
        <dbReference type="ChEBI" id="CHEBI:15377"/>
        <dbReference type="ChEBI" id="CHEBI:15378"/>
        <dbReference type="ChEBI" id="CHEBI:30823"/>
        <dbReference type="ChEBI" id="CHEBI:139228"/>
        <dbReference type="ChEBI" id="CHEBI:139230"/>
    </reaction>
    <physiologicalReaction direction="left-to-right" evidence="7">
        <dbReference type="Rhea" id="RHEA:55805"/>
    </physiologicalReaction>
</comment>
<comment type="biophysicochemical properties">
    <kinetics>
        <KM evidence="6">1.9 mM for 1(3)-monoolein</KM>
        <KM evidence="6">0.75 mM for 1-oleoyl lysophosphatidylglycerol (in presence of 5M CHAPS)</KM>
        <KM evidence="7">0.98 mM for (R,R)-2-(9Z-octadecenoyl)-sn-glycero-3-phospho-(2'-(9Z-octadecenoyl)-3'-sn-glycerol)</KM>
        <KM evidence="7">0.9 mM for racemic monoolein</KM>
        <KM evidence="7">1.1 mM for lysophosphatidylglycerol</KM>
        <Vmax evidence="6">478.6 umol/h/mg enzyme toward 1(3)-monoolein</Vmax>
        <Vmax evidence="6">93.2 umol/h/mg enzyme toward 1-oleoyl lysophosphatidylglycerol</Vmax>
        <Vmax evidence="7">89.0 umol/h/mg enzyme toward lysophosphatidylglycerol</Vmax>
        <Vmax evidence="7">348.0 umol/h/mg enzyme toward (R,R)-2-(9Z-octadecenoyl)-sn-glycero-3-phospho-(2'-(9Z-octadecenoyl)-3'-sn-glycerol)</Vmax>
        <Vmax evidence="7">806.0 umol/h/mg enzyme toward 1-(9Z-octadecenoyl)-glycerol</Vmax>
    </kinetics>
    <phDependence>
        <text evidence="7">Optimum pH is 7.5-8.0.</text>
    </phDependence>
</comment>
<comment type="subcellular location">
    <subcellularLocation>
        <location evidence="7">Late endosome membrane</location>
        <topology evidence="3">Single-pass type II membrane protein</topology>
    </subcellularLocation>
    <subcellularLocation>
        <location evidence="7">Lysosome membrane</location>
        <topology evidence="3">Single-pass type II membrane protein</topology>
    </subcellularLocation>
    <subcellularLocation>
        <location evidence="5">Mitochondrion membrane</location>
        <topology evidence="3">Single-pass type II membrane protein</topology>
    </subcellularLocation>
</comment>
<comment type="alternative products">
    <event type="alternative splicing"/>
    <isoform>
        <id>Q8R2Y0-1</id>
        <name>1</name>
        <sequence type="displayed"/>
    </isoform>
    <isoform>
        <id>Q8R2Y0-2</id>
        <name>2</name>
        <sequence type="described" ref="VSP_024012"/>
    </isoform>
</comment>
<comment type="tissue specificity">
    <text evidence="5 6">Widely expressed with higher expression in small intestine, liver and brown adipose tissue (PubMed:24095738). In brain, expressed postsynaptically in cortical neurons but not detected in microglia (at protein level) (PubMed:20657592).</text>
</comment>
<comment type="induction">
    <text evidence="6">Up-regulated in small intestine and liver by high-fat diet.</text>
</comment>
<comment type="disruption phenotype">
    <text evidence="6">Abhd6 partial knockdown inducing a stronger depletion in liver, kidney and white adipose tissues protects mice against hight-fat diet-induced metabolic disorder and obesity. De novo lipogenesis in liver is reduced and associated with a reduced expression of lipogenic genes. Accumulation of phospholipids and lysophospholipds in the liver is also observed.</text>
</comment>
<comment type="similarity">
    <text evidence="10">Belongs to the AB hydrolase superfamily.</text>
</comment>
<comment type="sequence caution" evidence="10">
    <conflict type="erroneous initiation">
        <sequence resource="EMBL-CDS" id="BAE40616"/>
    </conflict>
</comment>
<comment type="sequence caution" evidence="10">
    <conflict type="erroneous initiation">
        <sequence resource="EMBL-CDS" id="BAE40616"/>
    </conflict>
    <text>Extended N-terminus.</text>
</comment>
<reference key="1">
    <citation type="journal article" date="2005" name="Science">
        <title>The transcriptional landscape of the mammalian genome.</title>
        <authorList>
            <person name="Carninci P."/>
            <person name="Kasukawa T."/>
            <person name="Katayama S."/>
            <person name="Gough J."/>
            <person name="Frith M.C."/>
            <person name="Maeda N."/>
            <person name="Oyama R."/>
            <person name="Ravasi T."/>
            <person name="Lenhard B."/>
            <person name="Wells C."/>
            <person name="Kodzius R."/>
            <person name="Shimokawa K."/>
            <person name="Bajic V.B."/>
            <person name="Brenner S.E."/>
            <person name="Batalov S."/>
            <person name="Forrest A.R."/>
            <person name="Zavolan M."/>
            <person name="Davis M.J."/>
            <person name="Wilming L.G."/>
            <person name="Aidinis V."/>
            <person name="Allen J.E."/>
            <person name="Ambesi-Impiombato A."/>
            <person name="Apweiler R."/>
            <person name="Aturaliya R.N."/>
            <person name="Bailey T.L."/>
            <person name="Bansal M."/>
            <person name="Baxter L."/>
            <person name="Beisel K.W."/>
            <person name="Bersano T."/>
            <person name="Bono H."/>
            <person name="Chalk A.M."/>
            <person name="Chiu K.P."/>
            <person name="Choudhary V."/>
            <person name="Christoffels A."/>
            <person name="Clutterbuck D.R."/>
            <person name="Crowe M.L."/>
            <person name="Dalla E."/>
            <person name="Dalrymple B.P."/>
            <person name="de Bono B."/>
            <person name="Della Gatta G."/>
            <person name="di Bernardo D."/>
            <person name="Down T."/>
            <person name="Engstrom P."/>
            <person name="Fagiolini M."/>
            <person name="Faulkner G."/>
            <person name="Fletcher C.F."/>
            <person name="Fukushima T."/>
            <person name="Furuno M."/>
            <person name="Futaki S."/>
            <person name="Gariboldi M."/>
            <person name="Georgii-Hemming P."/>
            <person name="Gingeras T.R."/>
            <person name="Gojobori T."/>
            <person name="Green R.E."/>
            <person name="Gustincich S."/>
            <person name="Harbers M."/>
            <person name="Hayashi Y."/>
            <person name="Hensch T.K."/>
            <person name="Hirokawa N."/>
            <person name="Hill D."/>
            <person name="Huminiecki L."/>
            <person name="Iacono M."/>
            <person name="Ikeo K."/>
            <person name="Iwama A."/>
            <person name="Ishikawa T."/>
            <person name="Jakt M."/>
            <person name="Kanapin A."/>
            <person name="Katoh M."/>
            <person name="Kawasawa Y."/>
            <person name="Kelso J."/>
            <person name="Kitamura H."/>
            <person name="Kitano H."/>
            <person name="Kollias G."/>
            <person name="Krishnan S.P."/>
            <person name="Kruger A."/>
            <person name="Kummerfeld S.K."/>
            <person name="Kurochkin I.V."/>
            <person name="Lareau L.F."/>
            <person name="Lazarevic D."/>
            <person name="Lipovich L."/>
            <person name="Liu J."/>
            <person name="Liuni S."/>
            <person name="McWilliam S."/>
            <person name="Madan Babu M."/>
            <person name="Madera M."/>
            <person name="Marchionni L."/>
            <person name="Matsuda H."/>
            <person name="Matsuzawa S."/>
            <person name="Miki H."/>
            <person name="Mignone F."/>
            <person name="Miyake S."/>
            <person name="Morris K."/>
            <person name="Mottagui-Tabar S."/>
            <person name="Mulder N."/>
            <person name="Nakano N."/>
            <person name="Nakauchi H."/>
            <person name="Ng P."/>
            <person name="Nilsson R."/>
            <person name="Nishiguchi S."/>
            <person name="Nishikawa S."/>
            <person name="Nori F."/>
            <person name="Ohara O."/>
            <person name="Okazaki Y."/>
            <person name="Orlando V."/>
            <person name="Pang K.C."/>
            <person name="Pavan W.J."/>
            <person name="Pavesi G."/>
            <person name="Pesole G."/>
            <person name="Petrovsky N."/>
            <person name="Piazza S."/>
            <person name="Reed J."/>
            <person name="Reid J.F."/>
            <person name="Ring B.Z."/>
            <person name="Ringwald M."/>
            <person name="Rost B."/>
            <person name="Ruan Y."/>
            <person name="Salzberg S.L."/>
            <person name="Sandelin A."/>
            <person name="Schneider C."/>
            <person name="Schoenbach C."/>
            <person name="Sekiguchi K."/>
            <person name="Semple C.A."/>
            <person name="Seno S."/>
            <person name="Sessa L."/>
            <person name="Sheng Y."/>
            <person name="Shibata Y."/>
            <person name="Shimada H."/>
            <person name="Shimada K."/>
            <person name="Silva D."/>
            <person name="Sinclair B."/>
            <person name="Sperling S."/>
            <person name="Stupka E."/>
            <person name="Sugiura K."/>
            <person name="Sultana R."/>
            <person name="Takenaka Y."/>
            <person name="Taki K."/>
            <person name="Tammoja K."/>
            <person name="Tan S.L."/>
            <person name="Tang S."/>
            <person name="Taylor M.S."/>
            <person name="Tegner J."/>
            <person name="Teichmann S.A."/>
            <person name="Ueda H.R."/>
            <person name="van Nimwegen E."/>
            <person name="Verardo R."/>
            <person name="Wei C.L."/>
            <person name="Yagi K."/>
            <person name="Yamanishi H."/>
            <person name="Zabarovsky E."/>
            <person name="Zhu S."/>
            <person name="Zimmer A."/>
            <person name="Hide W."/>
            <person name="Bult C."/>
            <person name="Grimmond S.M."/>
            <person name="Teasdale R.D."/>
            <person name="Liu E.T."/>
            <person name="Brusic V."/>
            <person name="Quackenbush J."/>
            <person name="Wahlestedt C."/>
            <person name="Mattick J.S."/>
            <person name="Hume D.A."/>
            <person name="Kai C."/>
            <person name="Sasaki D."/>
            <person name="Tomaru Y."/>
            <person name="Fukuda S."/>
            <person name="Kanamori-Katayama M."/>
            <person name="Suzuki M."/>
            <person name="Aoki J."/>
            <person name="Arakawa T."/>
            <person name="Iida J."/>
            <person name="Imamura K."/>
            <person name="Itoh M."/>
            <person name="Kato T."/>
            <person name="Kawaji H."/>
            <person name="Kawagashira N."/>
            <person name="Kawashima T."/>
            <person name="Kojima M."/>
            <person name="Kondo S."/>
            <person name="Konno H."/>
            <person name="Nakano K."/>
            <person name="Ninomiya N."/>
            <person name="Nishio T."/>
            <person name="Okada M."/>
            <person name="Plessy C."/>
            <person name="Shibata K."/>
            <person name="Shiraki T."/>
            <person name="Suzuki S."/>
            <person name="Tagami M."/>
            <person name="Waki K."/>
            <person name="Watahiki A."/>
            <person name="Okamura-Oho Y."/>
            <person name="Suzuki H."/>
            <person name="Kawai J."/>
            <person name="Hayashizaki Y."/>
        </authorList>
    </citation>
    <scope>NUCLEOTIDE SEQUENCE [LARGE SCALE MRNA] (ISOFORMS 1 AND 2)</scope>
    <source>
        <strain>C57BL/6J</strain>
        <tissue>Amnion</tissue>
        <tissue>Embryo</tissue>
        <tissue>Kidney</tissue>
    </source>
</reference>
<reference key="2">
    <citation type="journal article" date="2004" name="Genome Res.">
        <title>The status, quality, and expansion of the NIH full-length cDNA project: the Mammalian Gene Collection (MGC).</title>
        <authorList>
            <consortium name="The MGC Project Team"/>
        </authorList>
    </citation>
    <scope>NUCLEOTIDE SEQUENCE [LARGE SCALE MRNA] (ISOFORM 1)</scope>
    <source>
        <strain>FVB/N-3</strain>
        <tissue>Mammary tumor</tissue>
    </source>
</reference>
<reference key="3">
    <citation type="journal article" date="2007" name="Chem. Biol.">
        <title>A comprehensive profile of brain enzymes that hydrolyze the endocannabinoid 2-arachidonoylglycerol.</title>
        <authorList>
            <person name="Blankman J.L."/>
            <person name="Simon G.M."/>
            <person name="Cravatt B.F."/>
        </authorList>
    </citation>
    <scope>FUNCTION</scope>
    <scope>CATALYTIC ACTIVITY</scope>
</reference>
<reference key="4">
    <citation type="journal article" date="2010" name="Cell">
        <title>A tissue-specific atlas of mouse protein phosphorylation and expression.</title>
        <authorList>
            <person name="Huttlin E.L."/>
            <person name="Jedrychowski M.P."/>
            <person name="Elias J.E."/>
            <person name="Goswami T."/>
            <person name="Rad R."/>
            <person name="Beausoleil S.A."/>
            <person name="Villen J."/>
            <person name="Haas W."/>
            <person name="Sowa M.E."/>
            <person name="Gygi S.P."/>
        </authorList>
    </citation>
    <scope>IDENTIFICATION BY MASS SPECTROMETRY [LARGE SCALE ANALYSIS]</scope>
    <source>
        <tissue>Brain</tissue>
        <tissue>Heart</tissue>
        <tissue>Kidney</tissue>
        <tissue>Liver</tissue>
        <tissue>Lung</tissue>
        <tissue>Pancreas</tissue>
        <tissue>Spleen</tissue>
        <tissue>Testis</tissue>
    </source>
</reference>
<reference key="5">
    <citation type="journal article" date="2010" name="Nat. Neurosci.">
        <title>The serine hydrolase ABHD6 controls the accumulation and efficacy of 2-AG at cannabinoid receptors.</title>
        <authorList>
            <person name="Marrs W.R."/>
            <person name="Blankman J.L."/>
            <person name="Horne E.A."/>
            <person name="Thomazeau A."/>
            <person name="Lin Y.H."/>
            <person name="Coy J."/>
            <person name="Bodor A.L."/>
            <person name="Muccioli G.G."/>
            <person name="Hu S.S."/>
            <person name="Woodruff G."/>
            <person name="Fung S."/>
            <person name="Lafourcade M."/>
            <person name="Alexander J.P."/>
            <person name="Long J.Z."/>
            <person name="Li W."/>
            <person name="Xu C."/>
            <person name="Moller T."/>
            <person name="Mackie K."/>
            <person name="Manzoni O.J."/>
            <person name="Cravatt B.F."/>
            <person name="Stella N."/>
        </authorList>
    </citation>
    <scope>FUNCTION</scope>
    <scope>SUBCELLULAR LOCATION</scope>
    <scope>TISSUE SPECIFICITY</scope>
</reference>
<reference key="6">
    <citation type="journal article" date="2013" name="Cell Rep.">
        <title>The serine hydrolase ABHD6 is a critical regulator of the metabolic syndrome.</title>
        <authorList>
            <person name="Thomas G."/>
            <person name="Betters J.L."/>
            <person name="Lord C.C."/>
            <person name="Brown A.L."/>
            <person name="Marshall S."/>
            <person name="Ferguson D."/>
            <person name="Sawyer J."/>
            <person name="Davis M.A."/>
            <person name="Melchior J.T."/>
            <person name="Blume L.C."/>
            <person name="Howlett A.C."/>
            <person name="Ivanova P.T."/>
            <person name="Milne S.B."/>
            <person name="Myers D.S."/>
            <person name="Mrak I."/>
            <person name="Leber V."/>
            <person name="Heier C."/>
            <person name="Taschler U."/>
            <person name="Blankman J.L."/>
            <person name="Cravatt B.F."/>
            <person name="Lee R.G."/>
            <person name="Crooke R.M."/>
            <person name="Graham M.J."/>
            <person name="Zimmermann R."/>
            <person name="Brown H.A."/>
            <person name="Brown J.M."/>
        </authorList>
    </citation>
    <scope>FUNCTION</scope>
    <scope>CATALYTIC ACTIVITY</scope>
    <scope>BIOPHYSICOCHEMICAL PROPERTIES</scope>
    <scope>MUTAGENESIS OF SER-148</scope>
    <scope>DISRUPTION PHENOTYPE</scope>
    <scope>TISSUE SPECIFICITY</scope>
    <scope>INDUCTION</scope>
</reference>
<reference key="7">
    <citation type="journal article" date="2015" name="J. Biol. Chem.">
        <title>alpha/beta hydrolase domain-containing 6 (ABHD6) degrades the late endosomal/lysosomal lipid bis(monoacylglycero)phosphate.</title>
        <authorList>
            <person name="Pribasnig M.A."/>
            <person name="Mrak I."/>
            <person name="Grabner G.F."/>
            <person name="Taschler U."/>
            <person name="Knittelfelder O."/>
            <person name="Scherz B."/>
            <person name="Eichmann T.O."/>
            <person name="Heier C."/>
            <person name="Grumet L."/>
            <person name="Kowaliuk J."/>
            <person name="Romauch M."/>
            <person name="Holler S."/>
            <person name="Anderl F."/>
            <person name="Wolinski H."/>
            <person name="Lass A."/>
            <person name="Breinbauer R."/>
            <person name="Marsche G."/>
            <person name="Brown J.M."/>
            <person name="Zimmermann R."/>
        </authorList>
    </citation>
    <scope>FUNCTION</scope>
    <scope>CATALYTIC ACTIVITY</scope>
    <scope>BIOPHYSICOCHEMICAL PROPERTIES</scope>
    <scope>SUBCELLULAR LOCATION</scope>
</reference>
<sequence length="336" mass="38205">MDLDVVNMFVIAGGTLAIPILAFVASFLLWPSALIRIYYWYWRRTLGMQVRYAHHEDYQFCYSFRGRPGHKPSILMLHGFSAHKDMWLSVVKFLPKNLHLVCVDMPGHEGTTRSSLDDLSIVGQVKRIHQFVECLKLNKKPFHLIGTSMGGHVAGVYAAYYPSDVCSLSLVCPAGLQYSTDNPFVQRLKELEESAAIQKIPLIPSTPEEMSEMLQLCSYVRFKVPQQILQGLVDVRIPHNSFYRKLFLEIVNEKSRYSLHENMDKIKVPTQIIWGKQDQVLDVSGADILAKSISNSQVEVLENCGHSVVMERPRKTAKLIVDFLASVHNTDNKKLN</sequence>
<feature type="chain" id="PRO_0000281576" description="Monoacylglycerol lipase ABHD6">
    <location>
        <begin position="1"/>
        <end position="336"/>
    </location>
</feature>
<feature type="topological domain" description="Extracellular" evidence="3">
    <location>
        <begin position="1"/>
        <end position="8"/>
    </location>
</feature>
<feature type="transmembrane region" description="Helical; Signal-anchor for type II membrane protein" evidence="3">
    <location>
        <begin position="9"/>
        <end position="29"/>
    </location>
</feature>
<feature type="topological domain" description="Cytoplasmic" evidence="3">
    <location>
        <begin position="30"/>
        <end position="336"/>
    </location>
</feature>
<feature type="active site" description="Nucleophile" evidence="11">
    <location>
        <position position="148"/>
    </location>
</feature>
<feature type="active site" description="Charge relay system" evidence="1">
    <location>
        <position position="278"/>
    </location>
</feature>
<feature type="active site" description="Charge relay system" evidence="1">
    <location>
        <position position="306"/>
    </location>
</feature>
<feature type="splice variant" id="VSP_024012" description="In isoform 2." evidence="8">
    <location>
        <begin position="1"/>
        <end position="47"/>
    </location>
</feature>
<feature type="mutagenesis site" description="Loss of the lipid hydrolase activity." evidence="6">
    <original>S</original>
    <variation>A</variation>
    <location>
        <position position="148"/>
    </location>
</feature>
<feature type="sequence conflict" description="In Ref. 1; BAB22430." evidence="10" ref="1">
    <original>D</original>
    <variation>G</variation>
    <location>
        <position position="85"/>
    </location>
</feature>
<feature type="sequence conflict" description="In Ref. 1; BAB22430." evidence="10" ref="1">
    <original>P</original>
    <variation>A</variation>
    <location>
        <position position="173"/>
    </location>
</feature>
<name>ABHD6_MOUSE</name>
<evidence type="ECO:0000250" key="1">
    <source>
        <dbReference type="UniProtKB" id="Q99685"/>
    </source>
</evidence>
<evidence type="ECO:0000250" key="2">
    <source>
        <dbReference type="UniProtKB" id="Q9BV23"/>
    </source>
</evidence>
<evidence type="ECO:0000255" key="3"/>
<evidence type="ECO:0000269" key="4">
    <source>
    </source>
</evidence>
<evidence type="ECO:0000269" key="5">
    <source>
    </source>
</evidence>
<evidence type="ECO:0000269" key="6">
    <source>
    </source>
</evidence>
<evidence type="ECO:0000269" key="7">
    <source>
    </source>
</evidence>
<evidence type="ECO:0000303" key="8">
    <source>
    </source>
</evidence>
<evidence type="ECO:0000303" key="9">
    <source>
    </source>
</evidence>
<evidence type="ECO:0000305" key="10"/>
<evidence type="ECO:0000305" key="11">
    <source>
    </source>
</evidence>
<evidence type="ECO:0000312" key="12">
    <source>
        <dbReference type="MGI" id="MGI:1913332"/>
    </source>
</evidence>
<organism>
    <name type="scientific">Mus musculus</name>
    <name type="common">Mouse</name>
    <dbReference type="NCBI Taxonomy" id="10090"/>
    <lineage>
        <taxon>Eukaryota</taxon>
        <taxon>Metazoa</taxon>
        <taxon>Chordata</taxon>
        <taxon>Craniata</taxon>
        <taxon>Vertebrata</taxon>
        <taxon>Euteleostomi</taxon>
        <taxon>Mammalia</taxon>
        <taxon>Eutheria</taxon>
        <taxon>Euarchontoglires</taxon>
        <taxon>Glires</taxon>
        <taxon>Rodentia</taxon>
        <taxon>Myomorpha</taxon>
        <taxon>Muroidea</taxon>
        <taxon>Muridae</taxon>
        <taxon>Murinae</taxon>
        <taxon>Mus</taxon>
        <taxon>Mus</taxon>
    </lineage>
</organism>
<proteinExistence type="evidence at protein level"/>
<keyword id="KW-0025">Alternative splicing</keyword>
<keyword id="KW-0967">Endosome</keyword>
<keyword id="KW-0378">Hydrolase</keyword>
<keyword id="KW-0443">Lipid metabolism</keyword>
<keyword id="KW-0458">Lysosome</keyword>
<keyword id="KW-0472">Membrane</keyword>
<keyword id="KW-0496">Mitochondrion</keyword>
<keyword id="KW-1185">Reference proteome</keyword>
<keyword id="KW-0735">Signal-anchor</keyword>
<keyword id="KW-0812">Transmembrane</keyword>
<keyword id="KW-1133">Transmembrane helix</keyword>
<gene>
    <name evidence="12" type="primary">Abhd6</name>
</gene>
<protein>
    <recommendedName>
        <fullName evidence="10">Monoacylglycerol lipase ABHD6</fullName>
        <ecNumber evidence="4 6">3.1.1.23</ecNumber>
    </recommendedName>
    <alternativeName>
        <fullName evidence="9">2-arachidonoylglycerol hydrolase</fullName>
    </alternativeName>
    <alternativeName>
        <fullName evidence="12">Abhydrolase domain-containing protein 6</fullName>
    </alternativeName>
</protein>
<accession>Q8R2Y0</accession>
<accession>Q3TGD2</accession>
<accession>Q9DCD4</accession>